<organism>
    <name type="scientific">Mycobacterium bovis (strain ATCC BAA-935 / AF2122/97)</name>
    <dbReference type="NCBI Taxonomy" id="233413"/>
    <lineage>
        <taxon>Bacteria</taxon>
        <taxon>Bacillati</taxon>
        <taxon>Actinomycetota</taxon>
        <taxon>Actinomycetes</taxon>
        <taxon>Mycobacteriales</taxon>
        <taxon>Mycobacteriaceae</taxon>
        <taxon>Mycobacterium</taxon>
        <taxon>Mycobacterium tuberculosis complex</taxon>
    </lineage>
</organism>
<gene>
    <name type="ordered locus">BQ2027_MB1296</name>
</gene>
<keyword id="KW-1185">Reference proteome</keyword>
<dbReference type="EMBL" id="LT708304">
    <property type="protein sequence ID" value="SIT99897.1"/>
    <property type="molecule type" value="Genomic_DNA"/>
</dbReference>
<dbReference type="RefSeq" id="NP_854950.1">
    <property type="nucleotide sequence ID" value="NC_002945.3"/>
</dbReference>
<dbReference type="SMR" id="P64790"/>
<dbReference type="KEGG" id="mbo:BQ2027_MB1296"/>
<dbReference type="PATRIC" id="fig|233413.5.peg.1421"/>
<dbReference type="Proteomes" id="UP000001419">
    <property type="component" value="Chromosome"/>
</dbReference>
<protein>
    <recommendedName>
        <fullName>Uncharacterized protein Mb1296</fullName>
    </recommendedName>
</protein>
<feature type="chain" id="PRO_0000103781" description="Uncharacterized protein Mb1296">
    <location>
        <begin position="1"/>
        <end position="226"/>
    </location>
</feature>
<proteinExistence type="predicted"/>
<accession>P64790</accession>
<accession>A0A1R3XXU4</accession>
<accession>Q11054</accession>
<accession>X2BHK3</accession>
<reference key="1">
    <citation type="journal article" date="2003" name="Proc. Natl. Acad. Sci. U.S.A.">
        <title>The complete genome sequence of Mycobacterium bovis.</title>
        <authorList>
            <person name="Garnier T."/>
            <person name="Eiglmeier K."/>
            <person name="Camus J.-C."/>
            <person name="Medina N."/>
            <person name="Mansoor H."/>
            <person name="Pryor M."/>
            <person name="Duthoy S."/>
            <person name="Grondin S."/>
            <person name="Lacroix C."/>
            <person name="Monsempe C."/>
            <person name="Simon S."/>
            <person name="Harris B."/>
            <person name="Atkin R."/>
            <person name="Doggett J."/>
            <person name="Mayes R."/>
            <person name="Keating L."/>
            <person name="Wheeler P.R."/>
            <person name="Parkhill J."/>
            <person name="Barrell B.G."/>
            <person name="Cole S.T."/>
            <person name="Gordon S.V."/>
            <person name="Hewinson R.G."/>
        </authorList>
    </citation>
    <scope>NUCLEOTIDE SEQUENCE [LARGE SCALE GENOMIC DNA]</scope>
    <source>
        <strain>ATCC BAA-935 / AF2122/97</strain>
    </source>
</reference>
<reference key="2">
    <citation type="journal article" date="2017" name="Genome Announc.">
        <title>Updated reference genome sequence and annotation of Mycobacterium bovis AF2122/97.</title>
        <authorList>
            <person name="Malone K.M."/>
            <person name="Farrell D."/>
            <person name="Stuber T.P."/>
            <person name="Schubert O.T."/>
            <person name="Aebersold R."/>
            <person name="Robbe-Austerman S."/>
            <person name="Gordon S.V."/>
        </authorList>
    </citation>
    <scope>NUCLEOTIDE SEQUENCE [LARGE SCALE GENOMIC DNA]</scope>
    <scope>GENOME REANNOTATION</scope>
    <source>
        <strain>ATCC BAA-935 / AF2122/97</strain>
    </source>
</reference>
<name>Y1296_MYCBO</name>
<sequence>MVLARPDAVFAPARNRCHVSLPVNAMSLKMKVCNHVIMRHHHMHGRRYGRPGGWQQAQQPDASGAAEWFAGRLPEDWFDGDPTVIVDREEITVIGKLPGLESPEEESAARASGRVSRFRDETRPERMTIADEAQNRYGRKVSWGVEVGGERILFTHIAVPVMTRLKQPERQVLDTLVDAGVARSRSDALAWSVKLVGEHTEEWLAKLRTAMSAVDDLRAQGPDLPA</sequence>